<sequence length="327" mass="35272">MTATKQHKKVILVGDGAVGSSYAFALVTQNIAQELGIIDIFKEKTQGDAEDLSHALAFTSPKKIYAADYSDCHDADLVVLTAGAPQKPGETRLDLVEKNLRINKEVVTQIVASGFKGIFLVAANPVDVLTYSTWKFSGFPKERVIGSGTSLDSARFRQALAAKIGVDARSVHAYIMGEHGDSEFAVWSHANVAGVGLYDWLQANRDIDEQGLVDLFISVRDAAYSIINKKGATFYGIAVALARITKAILDDENAVLPLSVFQEGQYEGVEDCYIGQPAIVGAYGIVRPVNIPLNDAELQKMQASANQLKAIIDEAFAKEEFASAAKN</sequence>
<name>LDH_STRP1</name>
<reference key="1">
    <citation type="journal article" date="2001" name="Proc. Natl. Acad. Sci. U.S.A.">
        <title>Complete genome sequence of an M1 strain of Streptococcus pyogenes.</title>
        <authorList>
            <person name="Ferretti J.J."/>
            <person name="McShan W.M."/>
            <person name="Ajdic D.J."/>
            <person name="Savic D.J."/>
            <person name="Savic G."/>
            <person name="Lyon K."/>
            <person name="Primeaux C."/>
            <person name="Sezate S."/>
            <person name="Suvorov A.N."/>
            <person name="Kenton S."/>
            <person name="Lai H.S."/>
            <person name="Lin S.P."/>
            <person name="Qian Y."/>
            <person name="Jia H.G."/>
            <person name="Najar F.Z."/>
            <person name="Ren Q."/>
            <person name="Zhu H."/>
            <person name="Song L."/>
            <person name="White J."/>
            <person name="Yuan X."/>
            <person name="Clifton S.W."/>
            <person name="Roe B.A."/>
            <person name="McLaughlin R.E."/>
        </authorList>
    </citation>
    <scope>NUCLEOTIDE SEQUENCE [LARGE SCALE GENOMIC DNA]</scope>
    <source>
        <strain>ATCC 700294 / SF370 / Serotype M1</strain>
    </source>
</reference>
<reference key="2">
    <citation type="journal article" date="2005" name="J. Infect. Dis.">
        <title>Evolutionary origin and emergence of a highly successful clone of serotype M1 group A Streptococcus involved multiple horizontal gene transfer events.</title>
        <authorList>
            <person name="Sumby P."/>
            <person name="Porcella S.F."/>
            <person name="Madrigal A.G."/>
            <person name="Barbian K.D."/>
            <person name="Virtaneva K."/>
            <person name="Ricklefs S.M."/>
            <person name="Sturdevant D.E."/>
            <person name="Graham M.R."/>
            <person name="Vuopio-Varkila J."/>
            <person name="Hoe N.P."/>
            <person name="Musser J.M."/>
        </authorList>
    </citation>
    <scope>NUCLEOTIDE SEQUENCE [LARGE SCALE GENOMIC DNA]</scope>
    <source>
        <strain>ATCC BAA-947 / MGAS5005 / Serotype M1</strain>
    </source>
</reference>
<keyword id="KW-0021">Allosteric enzyme</keyword>
<keyword id="KW-0963">Cytoplasm</keyword>
<keyword id="KW-0520">NAD</keyword>
<keyword id="KW-0560">Oxidoreductase</keyword>
<keyword id="KW-0597">Phosphoprotein</keyword>
<keyword id="KW-1185">Reference proteome</keyword>
<gene>
    <name evidence="2" type="primary">ldh</name>
    <name type="ordered locus">SPy_1151</name>
    <name type="ordered locus">M5005_Spy0873</name>
</gene>
<accession>P65259</accession>
<accession>Q48YT1</accession>
<accession>Q99ZN5</accession>
<feature type="initiator methionine" description="Removed" evidence="1">
    <location>
        <position position="1"/>
    </location>
</feature>
<feature type="chain" id="PRO_0000168399" description="L-lactate dehydrogenase">
    <location>
        <begin position="2"/>
        <end position="327"/>
    </location>
</feature>
<feature type="active site" description="Proton acceptor" evidence="2">
    <location>
        <position position="179"/>
    </location>
</feature>
<feature type="binding site" evidence="2">
    <location>
        <position position="18"/>
    </location>
    <ligand>
        <name>NAD(+)</name>
        <dbReference type="ChEBI" id="CHEBI:57540"/>
    </ligand>
</feature>
<feature type="binding site" evidence="2">
    <location>
        <position position="39"/>
    </location>
    <ligand>
        <name>NAD(+)</name>
        <dbReference type="ChEBI" id="CHEBI:57540"/>
    </ligand>
</feature>
<feature type="binding site" evidence="2">
    <location>
        <position position="44"/>
    </location>
    <ligand>
        <name>NAD(+)</name>
        <dbReference type="ChEBI" id="CHEBI:57540"/>
    </ligand>
</feature>
<feature type="binding site" evidence="2">
    <location>
        <position position="69"/>
    </location>
    <ligand>
        <name>NAD(+)</name>
        <dbReference type="ChEBI" id="CHEBI:57540"/>
    </ligand>
</feature>
<feature type="binding site" evidence="2">
    <location>
        <begin position="83"/>
        <end position="84"/>
    </location>
    <ligand>
        <name>NAD(+)</name>
        <dbReference type="ChEBI" id="CHEBI:57540"/>
    </ligand>
</feature>
<feature type="binding site" evidence="2">
    <location>
        <position position="86"/>
    </location>
    <ligand>
        <name>substrate</name>
    </ligand>
</feature>
<feature type="binding site" evidence="2">
    <location>
        <position position="92"/>
    </location>
    <ligand>
        <name>substrate</name>
    </ligand>
</feature>
<feature type="binding site" evidence="2">
    <location>
        <begin position="122"/>
        <end position="124"/>
    </location>
    <ligand>
        <name>NAD(+)</name>
        <dbReference type="ChEBI" id="CHEBI:57540"/>
    </ligand>
</feature>
<feature type="binding site" evidence="2">
    <location>
        <begin position="124"/>
        <end position="127"/>
    </location>
    <ligand>
        <name>substrate</name>
    </ligand>
</feature>
<feature type="binding site" evidence="2">
    <location>
        <position position="147"/>
    </location>
    <ligand>
        <name>NAD(+)</name>
        <dbReference type="ChEBI" id="CHEBI:57540"/>
    </ligand>
</feature>
<feature type="binding site" evidence="2">
    <location>
        <begin position="152"/>
        <end position="155"/>
    </location>
    <ligand>
        <name>substrate</name>
    </ligand>
</feature>
<feature type="binding site" evidence="2">
    <location>
        <position position="157"/>
    </location>
    <ligand>
        <name>beta-D-fructose 1,6-bisphosphate</name>
        <dbReference type="ChEBI" id="CHEBI:32966"/>
        <note>allosteric activator</note>
    </ligand>
</feature>
<feature type="binding site" evidence="2">
    <location>
        <position position="172"/>
    </location>
    <ligand>
        <name>beta-D-fructose 1,6-bisphosphate</name>
        <dbReference type="ChEBI" id="CHEBI:32966"/>
        <note>allosteric activator</note>
    </ligand>
</feature>
<feature type="binding site" evidence="2">
    <location>
        <position position="233"/>
    </location>
    <ligand>
        <name>substrate</name>
    </ligand>
</feature>
<feature type="modified residue" description="Phosphotyrosine" evidence="2">
    <location>
        <position position="224"/>
    </location>
</feature>
<organism>
    <name type="scientific">Streptococcus pyogenes serotype M1</name>
    <dbReference type="NCBI Taxonomy" id="301447"/>
    <lineage>
        <taxon>Bacteria</taxon>
        <taxon>Bacillati</taxon>
        <taxon>Bacillota</taxon>
        <taxon>Bacilli</taxon>
        <taxon>Lactobacillales</taxon>
        <taxon>Streptococcaceae</taxon>
        <taxon>Streptococcus</taxon>
    </lineage>
</organism>
<evidence type="ECO:0000250" key="1"/>
<evidence type="ECO:0000255" key="2">
    <source>
        <dbReference type="HAMAP-Rule" id="MF_00488"/>
    </source>
</evidence>
<evidence type="ECO:0000305" key="3"/>
<comment type="function">
    <text evidence="2">Catalyzes the conversion of lactate to pyruvate.</text>
</comment>
<comment type="catalytic activity">
    <reaction evidence="2">
        <text>(S)-lactate + NAD(+) = pyruvate + NADH + H(+)</text>
        <dbReference type="Rhea" id="RHEA:23444"/>
        <dbReference type="ChEBI" id="CHEBI:15361"/>
        <dbReference type="ChEBI" id="CHEBI:15378"/>
        <dbReference type="ChEBI" id="CHEBI:16651"/>
        <dbReference type="ChEBI" id="CHEBI:57540"/>
        <dbReference type="ChEBI" id="CHEBI:57945"/>
        <dbReference type="EC" id="1.1.1.27"/>
    </reaction>
</comment>
<comment type="activity regulation">
    <text evidence="2">Allosterically activated by fructose 1,6-bisphosphate (FBP).</text>
</comment>
<comment type="pathway">
    <text evidence="2">Fermentation; pyruvate fermentation to lactate; (S)-lactate from pyruvate: step 1/1.</text>
</comment>
<comment type="subunit">
    <text evidence="2">Homotetramer.</text>
</comment>
<comment type="subcellular location">
    <subcellularLocation>
        <location evidence="2">Cytoplasm</location>
    </subcellularLocation>
</comment>
<comment type="similarity">
    <text evidence="2 3">Belongs to the LDH/MDH superfamily. LDH family.</text>
</comment>
<proteinExistence type="inferred from homology"/>
<dbReference type="EC" id="1.1.1.27" evidence="2"/>
<dbReference type="EMBL" id="AE004092">
    <property type="protein sequence ID" value="AAK34023.1"/>
    <property type="molecule type" value="Genomic_DNA"/>
</dbReference>
<dbReference type="EMBL" id="CP000017">
    <property type="protein sequence ID" value="AAZ51491.1"/>
    <property type="molecule type" value="Genomic_DNA"/>
</dbReference>
<dbReference type="RefSeq" id="NP_269302.1">
    <property type="nucleotide sequence ID" value="NC_002737.2"/>
</dbReference>
<dbReference type="SMR" id="P65259"/>
<dbReference type="PaxDb" id="1314-HKU360_00935"/>
<dbReference type="KEGG" id="spy:SPy_1151"/>
<dbReference type="KEGG" id="spz:M5005_Spy0873"/>
<dbReference type="PATRIC" id="fig|160490.10.peg.1004"/>
<dbReference type="HOGENOM" id="CLU_045401_1_1_9"/>
<dbReference type="OMA" id="THLDSMR"/>
<dbReference type="UniPathway" id="UPA00554">
    <property type="reaction ID" value="UER00611"/>
</dbReference>
<dbReference type="Proteomes" id="UP000000750">
    <property type="component" value="Chromosome"/>
</dbReference>
<dbReference type="GO" id="GO:0005737">
    <property type="term" value="C:cytoplasm"/>
    <property type="evidence" value="ECO:0007669"/>
    <property type="project" value="UniProtKB-SubCell"/>
</dbReference>
<dbReference type="GO" id="GO:0004459">
    <property type="term" value="F:L-lactate dehydrogenase activity"/>
    <property type="evidence" value="ECO:0007669"/>
    <property type="project" value="UniProtKB-UniRule"/>
</dbReference>
<dbReference type="GO" id="GO:0006096">
    <property type="term" value="P:glycolytic process"/>
    <property type="evidence" value="ECO:0007669"/>
    <property type="project" value="UniProtKB-UniRule"/>
</dbReference>
<dbReference type="GO" id="GO:0006089">
    <property type="term" value="P:lactate metabolic process"/>
    <property type="evidence" value="ECO:0007669"/>
    <property type="project" value="TreeGrafter"/>
</dbReference>
<dbReference type="CDD" id="cd05291">
    <property type="entry name" value="HicDH_like"/>
    <property type="match status" value="1"/>
</dbReference>
<dbReference type="FunFam" id="3.40.50.720:FF:000018">
    <property type="entry name" value="Malate dehydrogenase"/>
    <property type="match status" value="1"/>
</dbReference>
<dbReference type="Gene3D" id="3.90.110.10">
    <property type="entry name" value="Lactate dehydrogenase/glycoside hydrolase, family 4, C-terminal"/>
    <property type="match status" value="1"/>
</dbReference>
<dbReference type="Gene3D" id="3.40.50.720">
    <property type="entry name" value="NAD(P)-binding Rossmann-like Domain"/>
    <property type="match status" value="1"/>
</dbReference>
<dbReference type="HAMAP" id="MF_00488">
    <property type="entry name" value="Lactate_dehydrog"/>
    <property type="match status" value="1"/>
</dbReference>
<dbReference type="InterPro" id="IPR001557">
    <property type="entry name" value="L-lactate/malate_DH"/>
</dbReference>
<dbReference type="InterPro" id="IPR011304">
    <property type="entry name" value="L-lactate_DH"/>
</dbReference>
<dbReference type="InterPro" id="IPR018177">
    <property type="entry name" value="L-lactate_DH_AS"/>
</dbReference>
<dbReference type="InterPro" id="IPR022383">
    <property type="entry name" value="Lactate/malate_DH_C"/>
</dbReference>
<dbReference type="InterPro" id="IPR001236">
    <property type="entry name" value="Lactate/malate_DH_N"/>
</dbReference>
<dbReference type="InterPro" id="IPR015955">
    <property type="entry name" value="Lactate_DH/Glyco_Ohase_4_C"/>
</dbReference>
<dbReference type="InterPro" id="IPR036291">
    <property type="entry name" value="NAD(P)-bd_dom_sf"/>
</dbReference>
<dbReference type="NCBIfam" id="TIGR01771">
    <property type="entry name" value="L-LDH-NAD"/>
    <property type="match status" value="1"/>
</dbReference>
<dbReference type="NCBIfam" id="NF000824">
    <property type="entry name" value="PRK00066.1"/>
    <property type="match status" value="1"/>
</dbReference>
<dbReference type="PANTHER" id="PTHR43128">
    <property type="entry name" value="L-2-HYDROXYCARBOXYLATE DEHYDROGENASE (NAD(P)(+))"/>
    <property type="match status" value="1"/>
</dbReference>
<dbReference type="PANTHER" id="PTHR43128:SF16">
    <property type="entry name" value="L-LACTATE DEHYDROGENASE"/>
    <property type="match status" value="1"/>
</dbReference>
<dbReference type="Pfam" id="PF02866">
    <property type="entry name" value="Ldh_1_C"/>
    <property type="match status" value="1"/>
</dbReference>
<dbReference type="Pfam" id="PF00056">
    <property type="entry name" value="Ldh_1_N"/>
    <property type="match status" value="1"/>
</dbReference>
<dbReference type="PIRSF" id="PIRSF000102">
    <property type="entry name" value="Lac_mal_DH"/>
    <property type="match status" value="1"/>
</dbReference>
<dbReference type="PRINTS" id="PR00086">
    <property type="entry name" value="LLDHDRGNASE"/>
</dbReference>
<dbReference type="SUPFAM" id="SSF56327">
    <property type="entry name" value="LDH C-terminal domain-like"/>
    <property type="match status" value="1"/>
</dbReference>
<dbReference type="SUPFAM" id="SSF51735">
    <property type="entry name" value="NAD(P)-binding Rossmann-fold domains"/>
    <property type="match status" value="1"/>
</dbReference>
<dbReference type="PROSITE" id="PS00064">
    <property type="entry name" value="L_LDH"/>
    <property type="match status" value="1"/>
</dbReference>
<protein>
    <recommendedName>
        <fullName evidence="2">L-lactate dehydrogenase</fullName>
        <shortName evidence="2">L-LDH</shortName>
        <ecNumber evidence="2">1.1.1.27</ecNumber>
    </recommendedName>
</protein>